<sequence length="670" mass="74585">MGEPAGVAGTMESPFSPGLFHRLDEDWDSALFAELGYFTDTDELQLEAANETYENNFDNLDFDLDLMPWESDIWDINNQICTVKDIKAEPQPLSPASSSYSVSSPRSVDSYSSTQHVPEELDLSSSSQMSPLSLYGENSNSLSSAEPLKEDKPVTGPRNKTENGLTPKKKIQVNSKPSIQPKPLLLPAAPKTQTNSSVPAKTIIIQTVPTLMPLAKQQPIISLQPAPTKGQTVLLSQPTVVQLQAPGVLPSAQPVLAVAGGVTQLPNHVVNVVPAPSANSPVNGKLSVTKPVLQSTMRNVGSDIAVLRRQQRMIKNRESACQSRKKKKEYMLGLEARLKAALSENEQLKKENGTLKRQLDEVVSENQRLKVPSPKRRVVCVMIVLAFIILNYGPMSMLEQDSRRMNPSVSPANQRRHLLGFSAKEAQDTSDGIIQKNSYRYDHSVSNDKALMVLTEEPLLYIPPPPCQPLINTTESLRLNHELRGWVHRHEVERTKSRRMTNNQQKTRILQGALEQGSNSQLMAVQYTETTSSISRNSGSELQVYYASPRSYQDFFEAIRRRGDTFYVVSFRRDHLLLPATTHNKTTRPKMSIVLPAININENVINGQDYEVMMQIDCQVMDTRILHIKSSSVPPYLRDQQRNQTNTFFGSPPAATEATHVVSTIPESLQ</sequence>
<name>ATF6A_HUMAN</name>
<dbReference type="EMBL" id="AF005887">
    <property type="protein sequence ID" value="AAB64434.1"/>
    <property type="molecule type" value="mRNA"/>
</dbReference>
<dbReference type="EMBL" id="AB015856">
    <property type="protein sequence ID" value="BAA34722.1"/>
    <property type="molecule type" value="mRNA"/>
</dbReference>
<dbReference type="EMBL" id="AL391825">
    <property type="status" value="NOT_ANNOTATED_CDS"/>
    <property type="molecule type" value="Genomic_DNA"/>
</dbReference>
<dbReference type="EMBL" id="AL450995">
    <property type="status" value="NOT_ANNOTATED_CDS"/>
    <property type="molecule type" value="Genomic_DNA"/>
</dbReference>
<dbReference type="EMBL" id="AL359541">
    <property type="status" value="NOT_ANNOTATED_CDS"/>
    <property type="molecule type" value="Genomic_DNA"/>
</dbReference>
<dbReference type="EMBL" id="BC014969">
    <property type="protein sequence ID" value="AAH14969.1"/>
    <property type="molecule type" value="mRNA"/>
</dbReference>
<dbReference type="EMBL" id="BC071997">
    <property type="protein sequence ID" value="AAH71997.1"/>
    <property type="molecule type" value="mRNA"/>
</dbReference>
<dbReference type="CCDS" id="CCDS1235.1"/>
<dbReference type="PIR" id="F34223">
    <property type="entry name" value="F34223"/>
</dbReference>
<dbReference type="RefSeq" id="NP_031374.2">
    <property type="nucleotide sequence ID" value="NM_007348.4"/>
</dbReference>
<dbReference type="SMR" id="P18850"/>
<dbReference type="BioGRID" id="116586">
    <property type="interactions" value="142"/>
</dbReference>
<dbReference type="ComplexPortal" id="CPX-6593">
    <property type="entry name" value="bZIP transcription factor complex, ATF6-ATF6"/>
</dbReference>
<dbReference type="ComplexPortal" id="CPX-6595">
    <property type="entry name" value="bZIP transcription factor complex, ATF6-ATF6B"/>
</dbReference>
<dbReference type="ComplexPortal" id="CPX-6597">
    <property type="entry name" value="bZIP transcription factor complex, ATF6-XBP1"/>
</dbReference>
<dbReference type="DIP" id="DIP-29304N"/>
<dbReference type="ELM" id="P18850"/>
<dbReference type="FunCoup" id="P18850">
    <property type="interactions" value="3572"/>
</dbReference>
<dbReference type="IntAct" id="P18850">
    <property type="interactions" value="79"/>
</dbReference>
<dbReference type="MINT" id="P18850"/>
<dbReference type="STRING" id="9606.ENSP00000356919"/>
<dbReference type="DrugBank" id="DB00852">
    <property type="generic name" value="Pseudoephedrine"/>
</dbReference>
<dbReference type="GlyConnect" id="1162">
    <property type="glycosylation" value="1 N-Linked glycan (1 site)"/>
</dbReference>
<dbReference type="GlyCosmos" id="P18850">
    <property type="glycosylation" value="3 sites, 1 glycan"/>
</dbReference>
<dbReference type="GlyGen" id="P18850">
    <property type="glycosylation" value="9 sites, 4 N-linked glycans (3 sites), 2 O-linked glycans (6 sites)"/>
</dbReference>
<dbReference type="iPTMnet" id="P18850"/>
<dbReference type="PhosphoSitePlus" id="P18850"/>
<dbReference type="BioMuta" id="ATF6"/>
<dbReference type="DMDM" id="66774203"/>
<dbReference type="jPOST" id="P18850"/>
<dbReference type="MassIVE" id="P18850"/>
<dbReference type="PaxDb" id="9606-ENSP00000356919"/>
<dbReference type="PeptideAtlas" id="P18850"/>
<dbReference type="ProteomicsDB" id="53616"/>
<dbReference type="Pumba" id="P18850"/>
<dbReference type="Antibodypedia" id="20515">
    <property type="antibodies" value="642 antibodies from 45 providers"/>
</dbReference>
<dbReference type="DNASU" id="22926"/>
<dbReference type="Ensembl" id="ENST00000367942.4">
    <property type="protein sequence ID" value="ENSP00000356919.3"/>
    <property type="gene ID" value="ENSG00000118217.7"/>
</dbReference>
<dbReference type="Ensembl" id="ENST00000681738.1">
    <property type="protein sequence ID" value="ENSP00000505025.1"/>
    <property type="gene ID" value="ENSG00000118217.7"/>
</dbReference>
<dbReference type="Ensembl" id="ENST00000681801.1">
    <property type="protein sequence ID" value="ENSP00000505998.1"/>
    <property type="gene ID" value="ENSG00000118217.7"/>
</dbReference>
<dbReference type="GeneID" id="22926"/>
<dbReference type="KEGG" id="hsa:22926"/>
<dbReference type="MANE-Select" id="ENST00000367942.4">
    <property type="protein sequence ID" value="ENSP00000356919.3"/>
    <property type="RefSeq nucleotide sequence ID" value="NM_007348.4"/>
    <property type="RefSeq protein sequence ID" value="NP_031374.2"/>
</dbReference>
<dbReference type="UCSC" id="uc001gbs.4">
    <property type="organism name" value="human"/>
</dbReference>
<dbReference type="AGR" id="HGNC:791"/>
<dbReference type="CTD" id="22926"/>
<dbReference type="DisGeNET" id="22926"/>
<dbReference type="GeneCards" id="ATF6"/>
<dbReference type="GeneReviews" id="ATF6"/>
<dbReference type="HGNC" id="HGNC:791">
    <property type="gene designation" value="ATF6"/>
</dbReference>
<dbReference type="HPA" id="ENSG00000118217">
    <property type="expression patterns" value="Low tissue specificity"/>
</dbReference>
<dbReference type="MalaCards" id="ATF6"/>
<dbReference type="MIM" id="605537">
    <property type="type" value="gene"/>
</dbReference>
<dbReference type="MIM" id="616517">
    <property type="type" value="phenotype"/>
</dbReference>
<dbReference type="neXtProt" id="NX_P18850"/>
<dbReference type="OpenTargets" id="ENSG00000118217"/>
<dbReference type="Orphanet" id="49382">
    <property type="disease" value="Achromatopsia"/>
</dbReference>
<dbReference type="Orphanet" id="1872">
    <property type="disease" value="Cone rod dystrophy"/>
</dbReference>
<dbReference type="PharmGKB" id="PA25091"/>
<dbReference type="VEuPathDB" id="HostDB:ENSG00000118217"/>
<dbReference type="eggNOG" id="KOG4343">
    <property type="taxonomic scope" value="Eukaryota"/>
</dbReference>
<dbReference type="GeneTree" id="ENSGT00940000159221"/>
<dbReference type="HOGENOM" id="CLU_026136_1_0_1"/>
<dbReference type="InParanoid" id="P18850"/>
<dbReference type="OMA" id="WSINNQF"/>
<dbReference type="OrthoDB" id="644067at2759"/>
<dbReference type="PAN-GO" id="P18850">
    <property type="GO annotations" value="5 GO annotations based on evolutionary models"/>
</dbReference>
<dbReference type="PhylomeDB" id="P18850"/>
<dbReference type="TreeFam" id="TF316079"/>
<dbReference type="PathwayCommons" id="P18850"/>
<dbReference type="Reactome" id="R-HSA-380994">
    <property type="pathway name" value="ATF4 activates genes in response to endoplasmic reticulum stress"/>
</dbReference>
<dbReference type="Reactome" id="R-HSA-381033">
    <property type="pathway name" value="ATF6 (ATF6-alpha) activates chaperones"/>
</dbReference>
<dbReference type="Reactome" id="R-HSA-381183">
    <property type="pathway name" value="ATF6 (ATF6-alpha) activates chaperone genes"/>
</dbReference>
<dbReference type="Reactome" id="R-HSA-9909505">
    <property type="pathway name" value="Modulation of host responses by IFN-stimulated genes"/>
</dbReference>
<dbReference type="SignaLink" id="P18850"/>
<dbReference type="SIGNOR" id="P18850"/>
<dbReference type="BioGRID-ORCS" id="22926">
    <property type="hits" value="16 hits in 1177 CRISPR screens"/>
</dbReference>
<dbReference type="ChiTaRS" id="ATF6">
    <property type="organism name" value="human"/>
</dbReference>
<dbReference type="GeneWiki" id="ATF6"/>
<dbReference type="GenomeRNAi" id="22926"/>
<dbReference type="Pharos" id="P18850">
    <property type="development level" value="Tbio"/>
</dbReference>
<dbReference type="PRO" id="PR:P18850"/>
<dbReference type="Proteomes" id="UP000005640">
    <property type="component" value="Chromosome 1"/>
</dbReference>
<dbReference type="RNAct" id="P18850">
    <property type="molecule type" value="protein"/>
</dbReference>
<dbReference type="Bgee" id="ENSG00000118217">
    <property type="expression patterns" value="Expressed in corpus epididymis and 210 other cell types or tissues"/>
</dbReference>
<dbReference type="GO" id="GO:0000785">
    <property type="term" value="C:chromatin"/>
    <property type="evidence" value="ECO:0000247"/>
    <property type="project" value="NTNU_SB"/>
</dbReference>
<dbReference type="GO" id="GO:0005829">
    <property type="term" value="C:cytosol"/>
    <property type="evidence" value="ECO:0000304"/>
    <property type="project" value="Reactome"/>
</dbReference>
<dbReference type="GO" id="GO:0005783">
    <property type="term" value="C:endoplasmic reticulum"/>
    <property type="evidence" value="ECO:0000314"/>
    <property type="project" value="ParkinsonsUK-UCL"/>
</dbReference>
<dbReference type="GO" id="GO:0005789">
    <property type="term" value="C:endoplasmic reticulum membrane"/>
    <property type="evidence" value="ECO:0000314"/>
    <property type="project" value="ParkinsonsUK-UCL"/>
</dbReference>
<dbReference type="GO" id="GO:0005794">
    <property type="term" value="C:Golgi apparatus"/>
    <property type="evidence" value="ECO:0000314"/>
    <property type="project" value="ParkinsonsUK-UCL"/>
</dbReference>
<dbReference type="GO" id="GO:0000139">
    <property type="term" value="C:Golgi membrane"/>
    <property type="evidence" value="ECO:0000304"/>
    <property type="project" value="Reactome"/>
</dbReference>
<dbReference type="GO" id="GO:0016020">
    <property type="term" value="C:membrane"/>
    <property type="evidence" value="ECO:0000314"/>
    <property type="project" value="ParkinsonsUK-UCL"/>
</dbReference>
<dbReference type="GO" id="GO:0005635">
    <property type="term" value="C:nuclear envelope"/>
    <property type="evidence" value="ECO:0000304"/>
    <property type="project" value="ProtInc"/>
</dbReference>
<dbReference type="GO" id="GO:0005654">
    <property type="term" value="C:nucleoplasm"/>
    <property type="evidence" value="ECO:0000304"/>
    <property type="project" value="Reactome"/>
</dbReference>
<dbReference type="GO" id="GO:0005634">
    <property type="term" value="C:nucleus"/>
    <property type="evidence" value="ECO:0000314"/>
    <property type="project" value="ParkinsonsUK-UCL"/>
</dbReference>
<dbReference type="GO" id="GO:0090575">
    <property type="term" value="C:RNA polymerase II transcription regulator complex"/>
    <property type="evidence" value="ECO:0000353"/>
    <property type="project" value="ComplexPortal"/>
</dbReference>
<dbReference type="GO" id="GO:0001228">
    <property type="term" value="F:DNA-binding transcription activator activity, RNA polymerase II-specific"/>
    <property type="evidence" value="ECO:0000314"/>
    <property type="project" value="NTNU_SB"/>
</dbReference>
<dbReference type="GO" id="GO:0003700">
    <property type="term" value="F:DNA-binding transcription factor activity"/>
    <property type="evidence" value="ECO:0000314"/>
    <property type="project" value="ParkinsonsUK-UCL"/>
</dbReference>
<dbReference type="GO" id="GO:0000981">
    <property type="term" value="F:DNA-binding transcription factor activity, RNA polymerase II-specific"/>
    <property type="evidence" value="ECO:0000247"/>
    <property type="project" value="NTNU_SB"/>
</dbReference>
<dbReference type="GO" id="GO:0019899">
    <property type="term" value="F:enzyme binding"/>
    <property type="evidence" value="ECO:0000353"/>
    <property type="project" value="ParkinsonsUK-UCL"/>
</dbReference>
<dbReference type="GO" id="GO:0042802">
    <property type="term" value="F:identical protein binding"/>
    <property type="evidence" value="ECO:0000353"/>
    <property type="project" value="IntAct"/>
</dbReference>
<dbReference type="GO" id="GO:0046982">
    <property type="term" value="F:protein heterodimerization activity"/>
    <property type="evidence" value="ECO:0000353"/>
    <property type="project" value="ParkinsonsUK-UCL"/>
</dbReference>
<dbReference type="GO" id="GO:0000978">
    <property type="term" value="F:RNA polymerase II cis-regulatory region sequence-specific DNA binding"/>
    <property type="evidence" value="ECO:0000314"/>
    <property type="project" value="NTNU_SB"/>
</dbReference>
<dbReference type="GO" id="GO:0000977">
    <property type="term" value="F:RNA polymerase II transcription regulatory region sequence-specific DNA binding"/>
    <property type="evidence" value="ECO:0000314"/>
    <property type="project" value="UniProtKB"/>
</dbReference>
<dbReference type="GO" id="GO:0043565">
    <property type="term" value="F:sequence-specific DNA binding"/>
    <property type="evidence" value="ECO:0000314"/>
    <property type="project" value="NTNU_SB"/>
</dbReference>
<dbReference type="GO" id="GO:1990837">
    <property type="term" value="F:sequence-specific double-stranded DNA binding"/>
    <property type="evidence" value="ECO:0000314"/>
    <property type="project" value="ARUK-UCL"/>
</dbReference>
<dbReference type="GO" id="GO:0000976">
    <property type="term" value="F:transcription cis-regulatory region binding"/>
    <property type="evidence" value="ECO:0000314"/>
    <property type="project" value="ParkinsonsUK-UCL"/>
</dbReference>
<dbReference type="GO" id="GO:0036500">
    <property type="term" value="P:ATF6-mediated unfolded protein response"/>
    <property type="evidence" value="ECO:0000304"/>
    <property type="project" value="ParkinsonsUK-UCL"/>
</dbReference>
<dbReference type="GO" id="GO:0030968">
    <property type="term" value="P:endoplasmic reticulum unfolded protein response"/>
    <property type="evidence" value="ECO:0000318"/>
    <property type="project" value="GO_Central"/>
</dbReference>
<dbReference type="GO" id="GO:0036503">
    <property type="term" value="P:ERAD pathway"/>
    <property type="evidence" value="ECO:0000303"/>
    <property type="project" value="ComplexPortal"/>
</dbReference>
<dbReference type="GO" id="GO:0001654">
    <property type="term" value="P:eye development"/>
    <property type="evidence" value="ECO:0000315"/>
    <property type="project" value="UniProtKB"/>
</dbReference>
<dbReference type="GO" id="GO:0043065">
    <property type="term" value="P:positive regulation of apoptotic process"/>
    <property type="evidence" value="ECO:0000314"/>
    <property type="project" value="ParkinsonsUK-UCL"/>
</dbReference>
<dbReference type="GO" id="GO:1903893">
    <property type="term" value="P:positive regulation of ATF6-mediated unfolded protein response"/>
    <property type="evidence" value="ECO:0000314"/>
    <property type="project" value="UniProtKB"/>
</dbReference>
<dbReference type="GO" id="GO:0010508">
    <property type="term" value="P:positive regulation of autophagy"/>
    <property type="evidence" value="ECO:0000315"/>
    <property type="project" value="MGI"/>
</dbReference>
<dbReference type="GO" id="GO:0045944">
    <property type="term" value="P:positive regulation of transcription by RNA polymerase II"/>
    <property type="evidence" value="ECO:0000314"/>
    <property type="project" value="ParkinsonsUK-UCL"/>
</dbReference>
<dbReference type="GO" id="GO:0006457">
    <property type="term" value="P:protein folding"/>
    <property type="evidence" value="ECO:0000304"/>
    <property type="project" value="ProtInc"/>
</dbReference>
<dbReference type="GO" id="GO:0006357">
    <property type="term" value="P:regulation of transcription by RNA polymerase II"/>
    <property type="evidence" value="ECO:0000318"/>
    <property type="project" value="GO_Central"/>
</dbReference>
<dbReference type="GO" id="GO:0034976">
    <property type="term" value="P:response to endoplasmic reticulum stress"/>
    <property type="evidence" value="ECO:0000314"/>
    <property type="project" value="ParkinsonsUK-UCL"/>
</dbReference>
<dbReference type="GO" id="GO:0007165">
    <property type="term" value="P:signal transduction"/>
    <property type="evidence" value="ECO:0000304"/>
    <property type="project" value="ProtInc"/>
</dbReference>
<dbReference type="GO" id="GO:0007601">
    <property type="term" value="P:visual perception"/>
    <property type="evidence" value="ECO:0000315"/>
    <property type="project" value="UniProtKB"/>
</dbReference>
<dbReference type="CDD" id="cd14700">
    <property type="entry name" value="bZIP_ATF6"/>
    <property type="match status" value="1"/>
</dbReference>
<dbReference type="FunFam" id="1.20.5.170:FF:000041">
    <property type="entry name" value="Cyclic AMP-dependent transcription factor ATF-6 beta"/>
    <property type="match status" value="1"/>
</dbReference>
<dbReference type="Gene3D" id="1.20.5.170">
    <property type="match status" value="1"/>
</dbReference>
<dbReference type="InterPro" id="IPR051882">
    <property type="entry name" value="ATF_bZIP_TF"/>
</dbReference>
<dbReference type="InterPro" id="IPR004827">
    <property type="entry name" value="bZIP"/>
</dbReference>
<dbReference type="InterPro" id="IPR046347">
    <property type="entry name" value="bZIP_sf"/>
</dbReference>
<dbReference type="PANTHER" id="PTHR46164">
    <property type="entry name" value="ATF6, ISOFORM C"/>
    <property type="match status" value="1"/>
</dbReference>
<dbReference type="PANTHER" id="PTHR46164:SF1">
    <property type="entry name" value="CYCLIC AMP-DEPENDENT TRANSCRIPTION FACTOR ATF-6 ALPHA"/>
    <property type="match status" value="1"/>
</dbReference>
<dbReference type="Pfam" id="PF00170">
    <property type="entry name" value="bZIP_1"/>
    <property type="match status" value="1"/>
</dbReference>
<dbReference type="SMART" id="SM00338">
    <property type="entry name" value="BRLZ"/>
    <property type="match status" value="1"/>
</dbReference>
<dbReference type="SUPFAM" id="SSF57959">
    <property type="entry name" value="Leucine zipper domain"/>
    <property type="match status" value="1"/>
</dbReference>
<dbReference type="PROSITE" id="PS50217">
    <property type="entry name" value="BZIP"/>
    <property type="match status" value="1"/>
</dbReference>
<dbReference type="PROSITE" id="PS00036">
    <property type="entry name" value="BZIP_BASIC"/>
    <property type="match status" value="1"/>
</dbReference>
<gene>
    <name type="primary">ATF6</name>
</gene>
<protein>
    <recommendedName>
        <fullName>Cyclic AMP-dependent transcription factor ATF-6 alpha</fullName>
        <shortName>cAMP-dependent transcription factor ATF-6 alpha</shortName>
    </recommendedName>
    <alternativeName>
        <fullName>Activating transcription factor 6 alpha</fullName>
        <shortName>ATF6-alpha</shortName>
    </alternativeName>
    <component>
        <recommendedName>
            <fullName>Processed cyclic AMP-dependent transcription factor ATF-6 alpha</fullName>
        </recommendedName>
    </component>
</protein>
<feature type="chain" id="PRO_0000076589" description="Cyclic AMP-dependent transcription factor ATF-6 alpha">
    <location>
        <begin position="1"/>
        <end position="670"/>
    </location>
</feature>
<feature type="chain" id="PRO_0000296200" description="Processed cyclic AMP-dependent transcription factor ATF-6 alpha" evidence="23">
    <location>
        <begin position="1"/>
        <end status="unknown"/>
    </location>
</feature>
<feature type="topological domain" description="Cytoplasmic" evidence="2">
    <location>
        <begin position="1"/>
        <end position="377"/>
    </location>
</feature>
<feature type="transmembrane region" description="Helical; Signal-anchor for type II membrane protein" evidence="2">
    <location>
        <begin position="378"/>
        <end position="398"/>
    </location>
</feature>
<feature type="topological domain" description="Lumenal" evidence="2">
    <location>
        <begin position="399"/>
        <end position="670"/>
    </location>
</feature>
<feature type="domain" description="bZIP" evidence="3">
    <location>
        <begin position="306"/>
        <end position="369"/>
    </location>
</feature>
<feature type="region of interest" description="Transcription activation" evidence="22">
    <location>
        <begin position="1"/>
        <end position="150"/>
    </location>
</feature>
<feature type="region of interest" description="Disordered" evidence="4">
    <location>
        <begin position="91"/>
        <end position="183"/>
    </location>
</feature>
<feature type="region of interest" description="Basic motif">
    <location>
        <begin position="308"/>
        <end position="339"/>
    </location>
</feature>
<feature type="region of interest" description="Leucine-zipper">
    <location>
        <begin position="348"/>
        <end position="355"/>
    </location>
</feature>
<feature type="region of interest" description="Interaction with THBS4" evidence="13">
    <location>
        <begin position="468"/>
        <end position="589"/>
    </location>
</feature>
<feature type="compositionally biased region" description="Low complexity" evidence="4">
    <location>
        <begin position="94"/>
        <end position="113"/>
    </location>
</feature>
<feature type="compositionally biased region" description="Low complexity" evidence="4">
    <location>
        <begin position="123"/>
        <end position="134"/>
    </location>
</feature>
<feature type="site" description="Cleavage; by MBTPS1" evidence="23">
    <location>
        <begin position="419"/>
        <end position="420"/>
    </location>
</feature>
<feature type="glycosylation site" description="N-linked (GlcNAc...) asparagine" evidence="10">
    <location>
        <position position="472"/>
    </location>
</feature>
<feature type="glycosylation site" description="N-linked (GlcNAc...) asparagine" evidence="10">
    <location>
        <position position="584"/>
    </location>
</feature>
<feature type="glycosylation site" description="N-linked (GlcNAc...) asparagine" evidence="10">
    <location>
        <position position="643"/>
    </location>
</feature>
<feature type="cross-link" description="Glycyl lysine isopeptide (Lys-Gly) (interchain with G-Cter in SUMO2)" evidence="24">
    <location>
        <position position="87"/>
    </location>
</feature>
<feature type="cross-link" description="Glycyl lysine isopeptide (Lys-Gly) (interchain with G-Cter in ubiquitin)" evidence="18">
    <location>
        <position position="152"/>
    </location>
</feature>
<feature type="sequence variant" id="VAR_022455" description="In dbSNP:rs1058405." evidence="20">
    <original>M</original>
    <variation>L</variation>
    <location>
        <position position="67"/>
    </location>
</feature>
<feature type="sequence variant" id="VAR_022456" description="In dbSNP:rs1058405." evidence="11">
    <original>M</original>
    <variation>V</variation>
    <location>
        <position position="67"/>
    </location>
</feature>
<feature type="sequence variant" id="VAR_022457" description="In dbSNP:rs2070150." evidence="20 21">
    <original>A</original>
    <variation>P</variation>
    <location>
        <position position="145"/>
    </location>
</feature>
<feature type="sequence variant" id="VAR_022458" description="In dbSNP:rs1135983." evidence="20 21">
    <original>P</original>
    <variation>S</variation>
    <location>
        <position position="157"/>
    </location>
</feature>
<feature type="sequence variant" id="VAR_075681" description="In ACHM7; reduced ATF6-mediated unfolded protein response; dbSNP:rs761357250." evidence="15">
    <original>R</original>
    <variation>C</variation>
    <location>
        <position position="324"/>
    </location>
</feature>
<feature type="sequence variant" id="VAR_075682" description="In ACHM7; dbSNP:rs796065053." evidence="15">
    <original>Y</original>
    <variation>N</variation>
    <location>
        <position position="567"/>
    </location>
</feature>
<feature type="mutagenesis site" description="Almost complete loss of RNF186-mediated ubiquitination." evidence="18">
    <original>K</original>
    <variation>R</variation>
    <location>
        <position position="152"/>
    </location>
</feature>
<feature type="mutagenesis site" description="Loss of proteolytic cleavage; when associated with L-394." evidence="7">
    <original>N</original>
    <variation>F</variation>
    <location>
        <position position="391"/>
    </location>
</feature>
<feature type="mutagenesis site" description="Loss of proteolytic cleavage; when associated with F-391." evidence="7">
    <original>P</original>
    <variation>L</variation>
    <location>
        <position position="394"/>
    </location>
</feature>
<feature type="mutagenesis site" description="Reduces proteolytic cleavage." evidence="7">
    <original>RR</original>
    <variation>AA</variation>
    <location>
        <begin position="415"/>
        <end position="416"/>
    </location>
</feature>
<feature type="mutagenesis site" description="Reduces proteolytic cleavage." evidence="7">
    <original>L</original>
    <variation>V</variation>
    <location>
        <position position="419"/>
    </location>
</feature>
<feature type="mutagenesis site" description="Loss of glycosylation at Asn-472 and increase of Golgi translocation rate." evidence="10">
    <original>T</original>
    <variation>I</variation>
    <location>
        <position position="474"/>
    </location>
</feature>
<feature type="mutagenesis site" description="Loss of glycosylation at Asn-584 and increase of Golgi translocation rate. Higher increase in Golgi translocation rate; when associated with Ile-645." evidence="10">
    <original>T</original>
    <variation>I</variation>
    <location>
        <position position="586"/>
    </location>
</feature>
<feature type="mutagenesis site" description="Loss of glycosylation at Asn-643 and increase of Golgi translocation rate. Higher increase in Golgi translocation rate; when associated with Ile-586." evidence="10">
    <original>T</original>
    <variation>I</variation>
    <location>
        <position position="645"/>
    </location>
</feature>
<feature type="sequence conflict" description="In Ref. 4; AAH14969/AAH71997." evidence="22" ref="4">
    <original>N</original>
    <variation>I</variation>
    <location>
        <position position="195"/>
    </location>
</feature>
<feature type="sequence conflict" description="In Ref. 4; AAH14969/AAH71997." evidence="22" ref="4">
    <original>VPAK</original>
    <variation>IPPQ</variation>
    <location>
        <begin position="198"/>
        <end position="201"/>
    </location>
</feature>
<feature type="sequence conflict" description="In Ref. 5; no nucleotide entry." evidence="22" ref="5">
    <original>L</original>
    <variation>I</variation>
    <location>
        <position position="307"/>
    </location>
</feature>
<feature type="sequence conflict" description="In Ref. 5; no nucleotide entry." evidence="22" ref="5">
    <original>T</original>
    <variation>R</variation>
    <location>
        <position position="354"/>
    </location>
</feature>
<feature type="sequence conflict" description="In Ref. 5; no nucleotide entry." evidence="22" ref="5">
    <original>NQRL</original>
    <variation>LRNS</variation>
    <location>
        <begin position="366"/>
        <end position="369"/>
    </location>
</feature>
<feature type="sequence conflict" description="In Ref. 1; AAB64434." evidence="22" ref="1">
    <original>S</original>
    <variation>G</variation>
    <location>
        <position position="410"/>
    </location>
</feature>
<feature type="sequence conflict" description="In Ref. 1; AAB64434." evidence="22" ref="1">
    <original>AL</original>
    <variation>VV</variation>
    <location>
        <begin position="513"/>
        <end position="514"/>
    </location>
</feature>
<proteinExistence type="evidence at protein level"/>
<evidence type="ECO:0000250" key="1">
    <source>
        <dbReference type="UniProtKB" id="F6VAN0"/>
    </source>
</evidence>
<evidence type="ECO:0000255" key="2"/>
<evidence type="ECO:0000255" key="3">
    <source>
        <dbReference type="PROSITE-ProRule" id="PRU00978"/>
    </source>
</evidence>
<evidence type="ECO:0000256" key="4">
    <source>
        <dbReference type="SAM" id="MobiDB-lite"/>
    </source>
</evidence>
<evidence type="ECO:0000269" key="5">
    <source>
    </source>
</evidence>
<evidence type="ECO:0000269" key="6">
    <source>
    </source>
</evidence>
<evidence type="ECO:0000269" key="7">
    <source>
    </source>
</evidence>
<evidence type="ECO:0000269" key="8">
    <source>
    </source>
</evidence>
<evidence type="ECO:0000269" key="9">
    <source>
    </source>
</evidence>
<evidence type="ECO:0000269" key="10">
    <source>
    </source>
</evidence>
<evidence type="ECO:0000269" key="11">
    <source>
    </source>
</evidence>
<evidence type="ECO:0000269" key="12">
    <source>
    </source>
</evidence>
<evidence type="ECO:0000269" key="13">
    <source>
    </source>
</evidence>
<evidence type="ECO:0000269" key="14">
    <source>
    </source>
</evidence>
<evidence type="ECO:0000269" key="15">
    <source>
    </source>
</evidence>
<evidence type="ECO:0000269" key="16">
    <source>
    </source>
</evidence>
<evidence type="ECO:0000269" key="17">
    <source>
    </source>
</evidence>
<evidence type="ECO:0000269" key="18">
    <source>
    </source>
</evidence>
<evidence type="ECO:0000269" key="19">
    <source>
    </source>
</evidence>
<evidence type="ECO:0000269" key="20">
    <source>
    </source>
</evidence>
<evidence type="ECO:0000269" key="21">
    <source>
    </source>
</evidence>
<evidence type="ECO:0000305" key="22"/>
<evidence type="ECO:0000305" key="23">
    <source>
    </source>
</evidence>
<evidence type="ECO:0007744" key="24">
    <source>
    </source>
</evidence>
<organism>
    <name type="scientific">Homo sapiens</name>
    <name type="common">Human</name>
    <dbReference type="NCBI Taxonomy" id="9606"/>
    <lineage>
        <taxon>Eukaryota</taxon>
        <taxon>Metazoa</taxon>
        <taxon>Chordata</taxon>
        <taxon>Craniata</taxon>
        <taxon>Vertebrata</taxon>
        <taxon>Euteleostomi</taxon>
        <taxon>Mammalia</taxon>
        <taxon>Eutheria</taxon>
        <taxon>Euarchontoglires</taxon>
        <taxon>Primates</taxon>
        <taxon>Haplorrhini</taxon>
        <taxon>Catarrhini</taxon>
        <taxon>Hominidae</taxon>
        <taxon>Homo</taxon>
    </lineage>
</organism>
<reference key="1">
    <citation type="journal article" date="1997" name="Mol. Cell. Biol.">
        <title>Interaction of ATF6 and serum response factor.</title>
        <authorList>
            <person name="Zhu C."/>
            <person name="Johansen F.E."/>
            <person name="Prywes R."/>
        </authorList>
    </citation>
    <scope>NUCLEOTIDE SEQUENCE [MRNA]</scope>
    <scope>TISSUE SPECIFICITY</scope>
    <scope>VARIANTS LEU-67; PRO-145 AND SER-157</scope>
    <source>
        <tissue>Cervix carcinoma</tissue>
    </source>
</reference>
<reference key="2">
    <citation type="journal article" date="1998" name="J. Biol. Chem.">
        <title>Identification of the cis-acting endoplasmic reticulum stress response element responsible for transcriptional induction of mammalian glucose-regulated proteins; involvement of basic-leucine zipper transcription factors.</title>
        <authorList>
            <person name="Yoshida H."/>
            <person name="Haze K."/>
            <person name="Yanagi H."/>
            <person name="Yura T."/>
            <person name="Mori K."/>
        </authorList>
    </citation>
    <scope>NUCLEOTIDE SEQUENCE [MRNA]</scope>
    <scope>VARIANTS PRO-145 AND SER-157</scope>
    <source>
        <tissue>Cervix carcinoma</tissue>
    </source>
</reference>
<reference key="3">
    <citation type="journal article" date="2006" name="Nature">
        <title>The DNA sequence and biological annotation of human chromosome 1.</title>
        <authorList>
            <person name="Gregory S.G."/>
            <person name="Barlow K.F."/>
            <person name="McLay K.E."/>
            <person name="Kaul R."/>
            <person name="Swarbreck D."/>
            <person name="Dunham A."/>
            <person name="Scott C.E."/>
            <person name="Howe K.L."/>
            <person name="Woodfine K."/>
            <person name="Spencer C.C.A."/>
            <person name="Jones M.C."/>
            <person name="Gillson C."/>
            <person name="Searle S."/>
            <person name="Zhou Y."/>
            <person name="Kokocinski F."/>
            <person name="McDonald L."/>
            <person name="Evans R."/>
            <person name="Phillips K."/>
            <person name="Atkinson A."/>
            <person name="Cooper R."/>
            <person name="Jones C."/>
            <person name="Hall R.E."/>
            <person name="Andrews T.D."/>
            <person name="Lloyd C."/>
            <person name="Ainscough R."/>
            <person name="Almeida J.P."/>
            <person name="Ambrose K.D."/>
            <person name="Anderson F."/>
            <person name="Andrew R.W."/>
            <person name="Ashwell R.I.S."/>
            <person name="Aubin K."/>
            <person name="Babbage A.K."/>
            <person name="Bagguley C.L."/>
            <person name="Bailey J."/>
            <person name="Beasley H."/>
            <person name="Bethel G."/>
            <person name="Bird C.P."/>
            <person name="Bray-Allen S."/>
            <person name="Brown J.Y."/>
            <person name="Brown A.J."/>
            <person name="Buckley D."/>
            <person name="Burton J."/>
            <person name="Bye J."/>
            <person name="Carder C."/>
            <person name="Chapman J.C."/>
            <person name="Clark S.Y."/>
            <person name="Clarke G."/>
            <person name="Clee C."/>
            <person name="Cobley V."/>
            <person name="Collier R.E."/>
            <person name="Corby N."/>
            <person name="Coville G.J."/>
            <person name="Davies J."/>
            <person name="Deadman R."/>
            <person name="Dunn M."/>
            <person name="Earthrowl M."/>
            <person name="Ellington A.G."/>
            <person name="Errington H."/>
            <person name="Frankish A."/>
            <person name="Frankland J."/>
            <person name="French L."/>
            <person name="Garner P."/>
            <person name="Garnett J."/>
            <person name="Gay L."/>
            <person name="Ghori M.R.J."/>
            <person name="Gibson R."/>
            <person name="Gilby L.M."/>
            <person name="Gillett W."/>
            <person name="Glithero R.J."/>
            <person name="Grafham D.V."/>
            <person name="Griffiths C."/>
            <person name="Griffiths-Jones S."/>
            <person name="Grocock R."/>
            <person name="Hammond S."/>
            <person name="Harrison E.S.I."/>
            <person name="Hart E."/>
            <person name="Haugen E."/>
            <person name="Heath P.D."/>
            <person name="Holmes S."/>
            <person name="Holt K."/>
            <person name="Howden P.J."/>
            <person name="Hunt A.R."/>
            <person name="Hunt S.E."/>
            <person name="Hunter G."/>
            <person name="Isherwood J."/>
            <person name="James R."/>
            <person name="Johnson C."/>
            <person name="Johnson D."/>
            <person name="Joy A."/>
            <person name="Kay M."/>
            <person name="Kershaw J.K."/>
            <person name="Kibukawa M."/>
            <person name="Kimberley A.M."/>
            <person name="King A."/>
            <person name="Knights A.J."/>
            <person name="Lad H."/>
            <person name="Laird G."/>
            <person name="Lawlor S."/>
            <person name="Leongamornlert D.A."/>
            <person name="Lloyd D.M."/>
            <person name="Loveland J."/>
            <person name="Lovell J."/>
            <person name="Lush M.J."/>
            <person name="Lyne R."/>
            <person name="Martin S."/>
            <person name="Mashreghi-Mohammadi M."/>
            <person name="Matthews L."/>
            <person name="Matthews N.S.W."/>
            <person name="McLaren S."/>
            <person name="Milne S."/>
            <person name="Mistry S."/>
            <person name="Moore M.J.F."/>
            <person name="Nickerson T."/>
            <person name="O'Dell C.N."/>
            <person name="Oliver K."/>
            <person name="Palmeiri A."/>
            <person name="Palmer S.A."/>
            <person name="Parker A."/>
            <person name="Patel D."/>
            <person name="Pearce A.V."/>
            <person name="Peck A.I."/>
            <person name="Pelan S."/>
            <person name="Phelps K."/>
            <person name="Phillimore B.J."/>
            <person name="Plumb R."/>
            <person name="Rajan J."/>
            <person name="Raymond C."/>
            <person name="Rouse G."/>
            <person name="Saenphimmachak C."/>
            <person name="Sehra H.K."/>
            <person name="Sheridan E."/>
            <person name="Shownkeen R."/>
            <person name="Sims S."/>
            <person name="Skuce C.D."/>
            <person name="Smith M."/>
            <person name="Steward C."/>
            <person name="Subramanian S."/>
            <person name="Sycamore N."/>
            <person name="Tracey A."/>
            <person name="Tromans A."/>
            <person name="Van Helmond Z."/>
            <person name="Wall M."/>
            <person name="Wallis J.M."/>
            <person name="White S."/>
            <person name="Whitehead S.L."/>
            <person name="Wilkinson J.E."/>
            <person name="Willey D.L."/>
            <person name="Williams H."/>
            <person name="Wilming L."/>
            <person name="Wray P.W."/>
            <person name="Wu Z."/>
            <person name="Coulson A."/>
            <person name="Vaudin M."/>
            <person name="Sulston J.E."/>
            <person name="Durbin R.M."/>
            <person name="Hubbard T."/>
            <person name="Wooster R."/>
            <person name="Dunham I."/>
            <person name="Carter N.P."/>
            <person name="McVean G."/>
            <person name="Ross M.T."/>
            <person name="Harrow J."/>
            <person name="Olson M.V."/>
            <person name="Beck S."/>
            <person name="Rogers J."/>
            <person name="Bentley D.R."/>
        </authorList>
    </citation>
    <scope>NUCLEOTIDE SEQUENCE [LARGE SCALE GENOMIC DNA]</scope>
</reference>
<reference key="4">
    <citation type="journal article" date="2004" name="Genome Res.">
        <title>The status, quality, and expansion of the NIH full-length cDNA project: the Mammalian Gene Collection (MGC).</title>
        <authorList>
            <consortium name="The MGC Project Team"/>
        </authorList>
    </citation>
    <scope>NUCLEOTIDE SEQUENCE [LARGE SCALE MRNA] OF 1-202</scope>
    <scope>VARIANT VAL-67</scope>
    <source>
        <tissue>Pancreas</tissue>
    </source>
</reference>
<reference key="5">
    <citation type="journal article" date="1989" name="Genes Dev.">
        <title>Transcription factor ATF cDNA clones: an extensive family of leucine zipper proteins able to selectively form DNA-binding heterodimers.</title>
        <authorList>
            <person name="Hai T."/>
            <person name="Liu F."/>
            <person name="Coukos W.J."/>
            <person name="Green M.R."/>
        </authorList>
    </citation>
    <scope>NUCLEOTIDE SEQUENCE [MRNA] OF 302-369</scope>
    <scope>SUBUNIT</scope>
</reference>
<reference key="6">
    <citation type="journal article" date="1990" name="Genes Dev.">
        <authorList>
            <person name="Hai T."/>
            <person name="Liu F."/>
            <person name="Coukos W.J."/>
            <person name="Green M.R."/>
        </authorList>
    </citation>
    <scope>ERRATUM OF PUBMED:2516827</scope>
</reference>
<reference key="7">
    <citation type="journal article" date="1999" name="Mol. Biol. Cell">
        <title>Mammalian transcription factor ATF6 is synthesized as a transmembrane protein and activated by proteolysis in response to endoplasmic reticulum stress.</title>
        <authorList>
            <person name="Haze K."/>
            <person name="Yoshida H."/>
            <person name="Yanagi H."/>
            <person name="Yura T."/>
            <person name="Mori K."/>
        </authorList>
    </citation>
    <scope>FUNCTION</scope>
    <scope>SUBCELLULAR LOCATION</scope>
</reference>
<reference key="8">
    <citation type="journal article" date="2000" name="Mol. Cell">
        <title>ER stress induces cleavage of membrane-bound ATF6 by the same proteases that process SREBPs.</title>
        <authorList>
            <person name="Ye J."/>
            <person name="Rawson R.B."/>
            <person name="Komuro R."/>
            <person name="Chen X."/>
            <person name="Dave U.P."/>
            <person name="Prywes R."/>
            <person name="Brown M.S."/>
            <person name="Goldstein J.L."/>
        </authorList>
    </citation>
    <scope>FUNCTION</scope>
    <scope>PROTEOLYTIC PROCESSING BY MBTPS1 AND MBTPS2</scope>
    <scope>MUTAGENESIS OF ASN-391; PRO-394; 415-ARG-ARG-416 AND LEU-419</scope>
</reference>
<reference key="9">
    <citation type="journal article" date="2001" name="Cell">
        <title>XBP1 mRNA is induced by ATF6 and spliced by IRE1 in response to ER stress to produce a highly active transcription factor.</title>
        <authorList>
            <person name="Yoshida H."/>
            <person name="Matsui T."/>
            <person name="Yamamoto A."/>
            <person name="Okada T."/>
            <person name="Mori K."/>
        </authorList>
    </citation>
    <scope>FUNCTION</scope>
    <scope>DNA-BINDING</scope>
</reference>
<reference key="10">
    <citation type="journal article" date="2001" name="Mol. Cell. Biol.">
        <title>Endoplasmic reticulum stress-induced formation of transcription factor complex ERSF including NF-Y (CBF) and activating transcription factors 6alpha and 6beta that activates the mammalian unfolded protein response.</title>
        <authorList>
            <person name="Yoshida H."/>
            <person name="Okada T."/>
            <person name="Haze K."/>
            <person name="Yanagi H."/>
            <person name="Yura T."/>
            <person name="Negishi M."/>
            <person name="Mori K."/>
        </authorList>
    </citation>
    <scope>FUNCTION</scope>
</reference>
<reference key="11">
    <citation type="journal article" date="2001" name="Gene">
        <title>The molecular biology and nomenclature of the activating transcription factor/cAMP responsive element binding family of transcription factors: activating transcription factor proteins and homeostasis.</title>
        <authorList>
            <person name="Hai T."/>
            <person name="Hartman M.G."/>
        </authorList>
    </citation>
    <scope>REVIEW</scope>
</reference>
<reference key="12">
    <citation type="journal article" date="2003" name="J. Biol. Chem.">
        <title>A serine protease inhibitor prevents endoplasmic reticulum stress-induced cleavage but not transport of the membrane-bound transcription factor ATF6.</title>
        <authorList>
            <person name="Okada T."/>
            <person name="Haze K."/>
            <person name="Nadanaka S."/>
            <person name="Yoshida H."/>
            <person name="Seidah N.G."/>
            <person name="Hirano Y."/>
            <person name="Sato R."/>
            <person name="Negishi M."/>
            <person name="Mori K."/>
        </authorList>
    </citation>
    <scope>PROTEOLYTIC CLEAVAGE</scope>
    <scope>SUBCELLULAR LOCATION</scope>
</reference>
<reference key="13">
    <citation type="journal article" date="2004" name="J. Biol. Chem.">
        <title>Underglycosylation of ATF6 as a novel sensing mechanism for activation of the unfolded protein response.</title>
        <authorList>
            <person name="Hong M."/>
            <person name="Luo S."/>
            <person name="Baumeister P."/>
            <person name="Huang J.M."/>
            <person name="Gogia R.K."/>
            <person name="Li M."/>
            <person name="Lee A.S."/>
        </authorList>
    </citation>
    <scope>GLYCOSYLATION AT ASN-472; ASN-584 AND ASN-643</scope>
    <scope>MUTAGENESIS OF THR-474; THR-586 AND THR-645</scope>
</reference>
<reference key="14">
    <citation type="journal article" date="2007" name="Dev. Cell">
        <title>Transcriptional induction of mammalian ER quality control proteins is mediated by single or combined action of ATF6alpha and XBP1.</title>
        <authorList>
            <person name="Yamamoto K."/>
            <person name="Sato T."/>
            <person name="Matsui T."/>
            <person name="Sato M."/>
            <person name="Okada T."/>
            <person name="Yoshida H."/>
            <person name="Harada A."/>
            <person name="Mori K."/>
        </authorList>
    </citation>
    <scope>INTERACTION WITH XBP1</scope>
</reference>
<reference key="15">
    <citation type="journal article" date="2012" name="Cell">
        <title>A thrombospondin-dependent pathway for a protective ER stress response.</title>
        <authorList>
            <person name="Lynch J.M."/>
            <person name="Maillet M."/>
            <person name="Vanhoutte D."/>
            <person name="Schloemer A."/>
            <person name="Sargent M.A."/>
            <person name="Blair N.S."/>
            <person name="Lynch K.A."/>
            <person name="Okada T."/>
            <person name="Aronow B.J."/>
            <person name="Osinska H."/>
            <person name="Prywes R."/>
            <person name="Lorenz J.N."/>
            <person name="Mori K."/>
            <person name="Lawler J."/>
            <person name="Robbins J."/>
            <person name="Molkentin J.D."/>
        </authorList>
    </citation>
    <scope>INTERACTION WITH THBS4</scope>
</reference>
<reference key="16">
    <citation type="journal article" date="2015" name="Hum. Genet.">
        <title>Mutation of ATF6 causes autosomal recessive achromatopsia.</title>
        <authorList>
            <consortium name="University of Washington Center for Mendelian Genomics"/>
            <person name="Ansar M."/>
            <person name="Santos-Cortez R.L."/>
            <person name="Saqib M.A."/>
            <person name="Zulfiqar F."/>
            <person name="Lee K."/>
            <person name="Ashraf N.M."/>
            <person name="Ullah E."/>
            <person name="Wang X."/>
            <person name="Sajid S."/>
            <person name="Khan F.S."/>
            <person name="Amin-ud-Din M."/>
            <person name="Smith J.D."/>
            <person name="Shendure J."/>
            <person name="Bamshad M.J."/>
            <person name="Nickerson D.A."/>
            <person name="Hameed A."/>
            <person name="Riazuddin S."/>
            <person name="Ahmed Z.M."/>
            <person name="Ahmad W."/>
            <person name="Leal S.M."/>
        </authorList>
    </citation>
    <scope>INVOLVEMENT IN ACHM7</scope>
</reference>
<reference key="17">
    <citation type="journal article" date="2015" name="Nat. Genet.">
        <title>Mutations in the unfolded protein response regulator ATF6 cause the cone dysfunction disorder achromatopsia.</title>
        <authorList>
            <person name="Kohl S."/>
            <person name="Zobor D."/>
            <person name="Chiang W.C."/>
            <person name="Weisschuh N."/>
            <person name="Staller J."/>
            <person name="Gonzalez Menendez I."/>
            <person name="Chang S."/>
            <person name="Beck S.C."/>
            <person name="Garcia Garrido M."/>
            <person name="Sothilingam V."/>
            <person name="Seeliger M.W."/>
            <person name="Stanzial F."/>
            <person name="Benedicenti F."/>
            <person name="Inzana F."/>
            <person name="Heon E."/>
            <person name="Vincent A."/>
            <person name="Beis J."/>
            <person name="Strom T.M."/>
            <person name="Rudolph G."/>
            <person name="Roosing S."/>
            <person name="Hollander A.I."/>
            <person name="Cremers F.P."/>
            <person name="Lopez I."/>
            <person name="Ren H."/>
            <person name="Moore A.T."/>
            <person name="Webster A.R."/>
            <person name="Michaelides M."/>
            <person name="Koenekoop R.K."/>
            <person name="Zrenner E."/>
            <person name="Kaufman R.J."/>
            <person name="Tsang S.H."/>
            <person name="Wissinger B."/>
            <person name="Lin J.H."/>
        </authorList>
    </citation>
    <scope>FUNCTION</scope>
    <scope>INVOLVEMENT IN ACHM7</scope>
    <scope>VARIANTS ACHM7 CYS-324 AND ASN-567</scope>
    <scope>CHARACTERIZATION OF VARIANT ACHM7 CYS-324</scope>
</reference>
<reference key="18">
    <citation type="journal article" date="2017" name="Nat. Struct. Mol. Biol.">
        <title>Site-specific mapping of the human SUMO proteome reveals co-modification with phosphorylation.</title>
        <authorList>
            <person name="Hendriks I.A."/>
            <person name="Lyon D."/>
            <person name="Young C."/>
            <person name="Jensen L.J."/>
            <person name="Vertegaal A.C."/>
            <person name="Nielsen M.L."/>
        </authorList>
    </citation>
    <scope>SUMOYLATION [LARGE SCALE ANALYSIS] AT LYS-87</scope>
    <scope>IDENTIFICATION BY MASS SPECTROMETRY [LARGE SCALE ANALYSIS]</scope>
</reference>
<reference key="19">
    <citation type="journal article" date="2019" name="Cell Rep.">
        <title>LACC1 required for NOD2-induced, ER stress-mediated innate immune outcomes in human macrophages and LACC1 risk variants modulate these outcomes.</title>
        <authorList>
            <person name="Huang C."/>
            <person name="Hedl M."/>
            <person name="Ranjan K."/>
            <person name="Abraham C."/>
        </authorList>
    </citation>
    <scope>INTERACTION WITH LACC1</scope>
</reference>
<reference key="20">
    <citation type="journal article" date="2021" name="J. Clin. Invest.">
        <title>Ubiquitination of ATF6 by disease-associated RNF186 promotes the innate receptor-induced unfolded protein response.</title>
        <authorList>
            <person name="Ranjan K."/>
            <person name="Hedl M."/>
            <person name="Sinha S."/>
            <person name="Zhang X."/>
            <person name="Abraham C."/>
        </authorList>
    </citation>
    <scope>UBIQUITINATION BY RNF186</scope>
    <scope>MUTAGENESIS OF LYS-152</scope>
</reference>
<reference key="21">
    <citation type="journal article" date="2023" name="Cell Rep.">
        <title>MANF regulates neuronal survival and UPR through its ER-located receptor IRE1alpha.</title>
        <authorList>
            <person name="Kovaleva V."/>
            <person name="Yu L.Y."/>
            <person name="Ivanova L."/>
            <person name="Shpironok O."/>
            <person name="Nam J."/>
            <person name="Eesmaa A."/>
            <person name="Kumpula E.P."/>
            <person name="Sakson S."/>
            <person name="Toots U."/>
            <person name="Ustav M."/>
            <person name="Huiskonen J.T."/>
            <person name="Voutilainen M.H."/>
            <person name="Lindholm P."/>
            <person name="Karelson M."/>
            <person name="Saarma M."/>
        </authorList>
    </citation>
    <scope>GLYCOSYLATION</scope>
</reference>
<keyword id="KW-0010">Activator</keyword>
<keyword id="KW-0225">Disease variant</keyword>
<keyword id="KW-0238">DNA-binding</keyword>
<keyword id="KW-0256">Endoplasmic reticulum</keyword>
<keyword id="KW-0325">Glycoprotein</keyword>
<keyword id="KW-0333">Golgi apparatus</keyword>
<keyword id="KW-1017">Isopeptide bond</keyword>
<keyword id="KW-0472">Membrane</keyword>
<keyword id="KW-0539">Nucleus</keyword>
<keyword id="KW-1267">Proteomics identification</keyword>
<keyword id="KW-1185">Reference proteome</keyword>
<keyword id="KW-0735">Signal-anchor</keyword>
<keyword id="KW-0804">Transcription</keyword>
<keyword id="KW-0805">Transcription regulation</keyword>
<keyword id="KW-0812">Transmembrane</keyword>
<keyword id="KW-1133">Transmembrane helix</keyword>
<keyword id="KW-0832">Ubl conjugation</keyword>
<keyword id="KW-0834">Unfolded protein response</keyword>
<accession>P18850</accession>
<accession>O15139</accession>
<accession>Q5VW62</accession>
<accession>Q6IPB5</accession>
<accession>Q9UEC9</accession>
<comment type="function">
    <molecule>Cyclic AMP-dependent transcription factor ATF-6 alpha</molecule>
    <text evidence="5 6 8">Precursor of the transcription factor form (Processed cyclic AMP-dependent transcription factor ATF-6 alpha), which is embedded in the endoplasmic reticulum membrane (PubMed:10564271, PubMed:11158310, PubMed:11779464). Endoplasmic reticulum stress promotes processing of this form, releasing the transcription factor form that translocates into the nucleus, where it activates transcription of genes involved in the unfolded protein response (UPR) (PubMed:10564271, PubMed:11158310, PubMed:11779464).</text>
</comment>
<comment type="function">
    <molecule>Processed cyclic AMP-dependent transcription factor ATF-6 alpha</molecule>
    <text evidence="5 6 7 8 15">Transcription factor that initiates the unfolded protein response (UPR) during endoplasmic reticulum stress by activating transcription of genes involved in the UPR (PubMed:10564271, PubMed:11158310, PubMed:11163209, PubMed:11779464). Binds DNA on the 5'-CCAC[GA]-3'half of the ER stress response element (ERSE) (5'-CCAAT-N(9)-CCAC[GA]-3') and of ERSE II (5'-ATTGG-N-CCACG-3') (PubMed:10564271, PubMed:11158310, PubMed:11779464). Binding to ERSE requires binding of NF-Y to ERSE. Could also be involved in activation of transcription by the serum response factor (PubMed:10564271, PubMed:11158310, PubMed:11779464). May play a role in foveal development and cone function in the retina (PubMed:26029869).</text>
</comment>
<comment type="subunit">
    <text evidence="12 17">Interacts with XBP1 isoform 2; the interaction occurs in a ER stress-dependent manner (PubMed:17765680). Interacts with LACC1 (PubMed:31875558).</text>
</comment>
<comment type="subunit">
    <molecule>Cyclic AMP-dependent transcription factor ATF-6 alpha</molecule>
    <text evidence="1 13">Interacts with THBS4 (via EGF-like 3; calcium-binding domain) which facilitates its processing, activation and nuclear translocation (PubMed:22682248). Interacts (via lumenal domain) with THBS1 (By similarity).</text>
</comment>
<comment type="subunit">
    <molecule>Processed cyclic AMP-dependent transcription factor ATF-6 alpha</molecule>
    <text evidence="14">Homodimer and heterodimer with ATF6-beta. The dimer interacts with the nuclear transcription factor Y (NF-Y) trimer through direct binding to NF-Y subunit C (NF-YC). Also interacts with the transcription factors GTF2I, YY1 and SRF.</text>
</comment>
<comment type="interaction">
    <interactant intactId="EBI-852157">
        <id>P18850</id>
    </interactant>
    <interactant intactId="EBI-852157">
        <id>P18850</id>
        <label>ATF6</label>
    </interactant>
    <organismsDiffer>false</organismsDiffer>
    <experiments>5</experiments>
</comment>
<comment type="interaction">
    <interactant intactId="EBI-852157">
        <id>P18850</id>
    </interactant>
    <interactant intactId="EBI-2841031">
        <id>Q99941</id>
        <label>ATF6B</label>
    </interactant>
    <organismsDiffer>false</organismsDiffer>
    <experiments>2</experiments>
</comment>
<comment type="interaction">
    <interactant intactId="EBI-852157">
        <id>P18850</id>
    </interactant>
    <interactant intactId="EBI-852194">
        <id>Q68CJ9</id>
        <label>CREB3L3</label>
    </interactant>
    <organismsDiffer>false</organismsDiffer>
    <experiments>2</experiments>
</comment>
<comment type="interaction">
    <interactant intactId="EBI-852157">
        <id>P18850</id>
    </interactant>
    <interactant intactId="EBI-1181987">
        <id>Q53ET0</id>
        <label>CRTC2</label>
    </interactant>
    <organismsDiffer>false</organismsDiffer>
    <experiments>3</experiments>
</comment>
<comment type="interaction">
    <interactant intactId="EBI-852157">
        <id>P18850</id>
    </interactant>
    <interactant intactId="EBI-354921">
        <id>P11021</id>
        <label>HSPA5</label>
    </interactant>
    <organismsDiffer>false</organismsDiffer>
    <experiments>2</experiments>
</comment>
<comment type="interaction">
    <interactant intactId="EBI-852157">
        <id>P18850</id>
    </interactant>
    <interactant intactId="EBI-6942961">
        <id>P17861</id>
        <label>XBP1</label>
    </interactant>
    <organismsDiffer>false</organismsDiffer>
    <experiments>4</experiments>
</comment>
<comment type="interaction">
    <interactant intactId="EBI-852157">
        <id>P18850</id>
    </interactant>
    <interactant intactId="EBI-8018890">
        <id>Q3U182</id>
        <label>Crtc2</label>
    </interactant>
    <organismsDiffer>true</organismsDiffer>
    <experiments>2</experiments>
</comment>
<comment type="subcellular location">
    <subcellularLocation>
        <location evidence="5 9">Endoplasmic reticulum membrane</location>
        <topology evidence="2">Single-pass type II membrane protein</topology>
    </subcellularLocation>
    <subcellularLocation>
        <location evidence="9">Golgi apparatus membrane</location>
        <topology evidence="2">Single-pass type II membrane protein</topology>
    </subcellularLocation>
    <text evidence="9">Translocates from the endoplasmic reticulum to the Golgi, where it is processed.</text>
</comment>
<comment type="subcellular location">
    <molecule>Processed cyclic AMP-dependent transcription factor ATF-6 alpha</molecule>
    <subcellularLocation>
        <location evidence="5 9">Nucleus</location>
    </subcellularLocation>
    <text evidence="1 5 9">Under ER stress the cleaved N-terminal cytoplasmic domain translocates into the nucleus (PubMed:10564271, PubMed:12782636). THBS4 promotes its nuclear shuttling (By similarity).</text>
</comment>
<comment type="tissue specificity">
    <text evidence="20">Ubiquitous.</text>
</comment>
<comment type="domain">
    <text evidence="5">The basic domain functions as a nuclear localization signal.</text>
</comment>
<comment type="domain">
    <text evidence="5">The basic leucine-zipper domain is sufficient for association with the NF-Y trimer and binding to ERSE.</text>
</comment>
<comment type="PTM">
    <text evidence="7 9">During unfolded protein response, a fragment of approximately 50 kDa containing the cytoplasmic transcription factor domain is released by proteolysis. The cleavage seems to be performed sequentially by site-1 (MBTPS1, S1P) and site-2 (MBTPS2, S2P) proteases.</text>
</comment>
<comment type="PTM">
    <text evidence="10 19">N-glycosylated; in its luminal domain (PubMed:36739529). The glycosylation status may serve as a sensor for ER homeostasis, resulting in ATF6 activation to trigger the unfolded protein response (UPR).</text>
</comment>
<comment type="PTM">
    <text evidence="18">Ubiquitinated by RNF186 at Lys-152, which is required for pattern recognition receptor-induced unfolded protein response-associated outcomes.</text>
</comment>
<comment type="disease" evidence="15 16">
    <disease id="DI-04499">
        <name>Achromatopsia 7</name>
        <acronym>ACHM7</acronym>
        <description>A form of achromatopsia, an ocular stationary disorder due to the absence of functioning cone photoreceptors in the retina. It is characterized by total colorblindness, low visual acuity, photophobia and nystagmus.</description>
        <dbReference type="MIM" id="616517"/>
    </disease>
    <text>The disease is caused by variants affecting the gene represented in this entry.</text>
</comment>
<comment type="similarity">
    <text evidence="22">Belongs to the bZIP family. ATF subfamily.</text>
</comment>